<gene>
    <name type="primary">HBZ1</name>
</gene>
<accession>P06347</accession>
<protein>
    <recommendedName>
        <fullName>Hemoglobin subunit zeta</fullName>
    </recommendedName>
    <alternativeName>
        <fullName>Hemoglobin zeta chain</fullName>
    </alternativeName>
    <alternativeName>
        <fullName>Zeta-globin</fullName>
    </alternativeName>
</protein>
<feature type="initiator methionine" description="Removed" evidence="2">
    <location>
        <position position="1"/>
    </location>
</feature>
<feature type="chain" id="PRO_0000052853" description="Hemoglobin subunit zeta">
    <location>
        <begin position="2"/>
        <end position="142"/>
    </location>
</feature>
<feature type="domain" description="Globin" evidence="3">
    <location>
        <begin position="2"/>
        <end position="142"/>
    </location>
</feature>
<feature type="binding site" description="distal binding residue">
    <location>
        <position position="59"/>
    </location>
    <ligand>
        <name>heme b</name>
        <dbReference type="ChEBI" id="CHEBI:60344"/>
    </ligand>
    <ligandPart>
        <name>Fe</name>
        <dbReference type="ChEBI" id="CHEBI:18248"/>
    </ligandPart>
</feature>
<feature type="binding site" description="proximal binding residue">
    <location>
        <position position="88"/>
    </location>
    <ligand>
        <name>heme b</name>
        <dbReference type="ChEBI" id="CHEBI:60344"/>
    </ligand>
    <ligandPart>
        <name>Fe</name>
        <dbReference type="ChEBI" id="CHEBI:18248"/>
    </ligandPart>
</feature>
<feature type="modified residue" description="N-acetylserine" evidence="2">
    <location>
        <position position="2"/>
    </location>
</feature>
<feature type="modified residue" description="Phosphothreonine" evidence="2">
    <location>
        <position position="29"/>
    </location>
</feature>
<feature type="modified residue" description="Phosphoserine" evidence="2">
    <location>
        <position position="53"/>
    </location>
</feature>
<feature type="modified residue" description="Phosphoserine" evidence="2">
    <location>
        <position position="73"/>
    </location>
</feature>
<feature type="modified residue" description="Phosphoserine" evidence="2">
    <location>
        <position position="82"/>
    </location>
</feature>
<dbReference type="EMBL" id="X03234">
    <property type="protein sequence ID" value="CAA26980.1"/>
    <property type="molecule type" value="Genomic_DNA"/>
</dbReference>
<dbReference type="PIR" id="A02337">
    <property type="entry name" value="HZCZ"/>
</dbReference>
<dbReference type="RefSeq" id="XP_016784461.1">
    <property type="nucleotide sequence ID" value="XM_016928972.1"/>
</dbReference>
<dbReference type="SMR" id="P06347"/>
<dbReference type="FunCoup" id="P06347">
    <property type="interactions" value="83"/>
</dbReference>
<dbReference type="STRING" id="9598.ENSPTRP00000012857"/>
<dbReference type="PaxDb" id="9598-ENSPTRP00000012857"/>
<dbReference type="Ensembl" id="ENSPTRT00000013880.5">
    <property type="protein sequence ID" value="ENSPTRP00000012857.5"/>
    <property type="gene ID" value="ENSPTRG00000031328.5"/>
</dbReference>
<dbReference type="VGNC" id="VGNC:51580">
    <property type="gene designation" value="HBZ"/>
</dbReference>
<dbReference type="eggNOG" id="KOG3378">
    <property type="taxonomic scope" value="Eukaryota"/>
</dbReference>
<dbReference type="GeneTree" id="ENSGT00940000158623"/>
<dbReference type="InParanoid" id="P06347"/>
<dbReference type="OMA" id="MVKAFWA"/>
<dbReference type="Proteomes" id="UP000002277">
    <property type="component" value="Chromosome 16"/>
</dbReference>
<dbReference type="Bgee" id="ENSPTRG00000031328">
    <property type="expression patterns" value="Expressed in bone marrow and 3 other cell types or tissues"/>
</dbReference>
<dbReference type="GO" id="GO:0031838">
    <property type="term" value="C:haptoglobin-hemoglobin complex"/>
    <property type="evidence" value="ECO:0000318"/>
    <property type="project" value="GO_Central"/>
</dbReference>
<dbReference type="GO" id="GO:0005833">
    <property type="term" value="C:hemoglobin complex"/>
    <property type="evidence" value="ECO:0000318"/>
    <property type="project" value="GO_Central"/>
</dbReference>
<dbReference type="GO" id="GO:0020037">
    <property type="term" value="F:heme binding"/>
    <property type="evidence" value="ECO:0000318"/>
    <property type="project" value="GO_Central"/>
</dbReference>
<dbReference type="GO" id="GO:0005506">
    <property type="term" value="F:iron ion binding"/>
    <property type="evidence" value="ECO:0007669"/>
    <property type="project" value="InterPro"/>
</dbReference>
<dbReference type="GO" id="GO:0019825">
    <property type="term" value="F:oxygen binding"/>
    <property type="evidence" value="ECO:0000318"/>
    <property type="project" value="GO_Central"/>
</dbReference>
<dbReference type="GO" id="GO:0005344">
    <property type="term" value="F:oxygen carrier activity"/>
    <property type="evidence" value="ECO:0000318"/>
    <property type="project" value="GO_Central"/>
</dbReference>
<dbReference type="GO" id="GO:0098869">
    <property type="term" value="P:cellular oxidant detoxification"/>
    <property type="evidence" value="ECO:0007669"/>
    <property type="project" value="GOC"/>
</dbReference>
<dbReference type="GO" id="GO:0042744">
    <property type="term" value="P:hydrogen peroxide catabolic process"/>
    <property type="evidence" value="ECO:0000318"/>
    <property type="project" value="GO_Central"/>
</dbReference>
<dbReference type="CDD" id="cd08927">
    <property type="entry name" value="Hb-alpha-like"/>
    <property type="match status" value="1"/>
</dbReference>
<dbReference type="FunFam" id="1.10.490.10:FF:000002">
    <property type="entry name" value="Hemoglobin subunit alpha"/>
    <property type="match status" value="1"/>
</dbReference>
<dbReference type="Gene3D" id="1.10.490.10">
    <property type="entry name" value="Globins"/>
    <property type="match status" value="1"/>
</dbReference>
<dbReference type="InterPro" id="IPR000971">
    <property type="entry name" value="Globin"/>
</dbReference>
<dbReference type="InterPro" id="IPR009050">
    <property type="entry name" value="Globin-like_sf"/>
</dbReference>
<dbReference type="InterPro" id="IPR012292">
    <property type="entry name" value="Globin/Proto"/>
</dbReference>
<dbReference type="InterPro" id="IPR002338">
    <property type="entry name" value="Hemoglobin_a-typ"/>
</dbReference>
<dbReference type="InterPro" id="IPR050056">
    <property type="entry name" value="Hemoglobin_oxygen_transport"/>
</dbReference>
<dbReference type="InterPro" id="IPR002340">
    <property type="entry name" value="Hemoglobin_zeta"/>
</dbReference>
<dbReference type="PANTHER" id="PTHR11442">
    <property type="entry name" value="HEMOGLOBIN FAMILY MEMBER"/>
    <property type="match status" value="1"/>
</dbReference>
<dbReference type="PANTHER" id="PTHR11442:SF41">
    <property type="entry name" value="HEMOGLOBIN SUBUNIT ZETA"/>
    <property type="match status" value="1"/>
</dbReference>
<dbReference type="Pfam" id="PF00042">
    <property type="entry name" value="Globin"/>
    <property type="match status" value="1"/>
</dbReference>
<dbReference type="PRINTS" id="PR00612">
    <property type="entry name" value="ALPHAHAEM"/>
</dbReference>
<dbReference type="PRINTS" id="PR00816">
    <property type="entry name" value="ZETAHAEM"/>
</dbReference>
<dbReference type="SUPFAM" id="SSF46458">
    <property type="entry name" value="Globin-like"/>
    <property type="match status" value="1"/>
</dbReference>
<dbReference type="PROSITE" id="PS01033">
    <property type="entry name" value="GLOBIN"/>
    <property type="match status" value="1"/>
</dbReference>
<organism>
    <name type="scientific">Pan troglodytes</name>
    <name type="common">Chimpanzee</name>
    <dbReference type="NCBI Taxonomy" id="9598"/>
    <lineage>
        <taxon>Eukaryota</taxon>
        <taxon>Metazoa</taxon>
        <taxon>Chordata</taxon>
        <taxon>Craniata</taxon>
        <taxon>Vertebrata</taxon>
        <taxon>Euteleostomi</taxon>
        <taxon>Mammalia</taxon>
        <taxon>Eutheria</taxon>
        <taxon>Euarchontoglires</taxon>
        <taxon>Primates</taxon>
        <taxon>Haplorrhini</taxon>
        <taxon>Catarrhini</taxon>
        <taxon>Hominidae</taxon>
        <taxon>Pan</taxon>
    </lineage>
</organism>
<name>HBAZ_PANTR</name>
<keyword id="KW-0007">Acetylation</keyword>
<keyword id="KW-0349">Heme</keyword>
<keyword id="KW-0408">Iron</keyword>
<keyword id="KW-0479">Metal-binding</keyword>
<keyword id="KW-0561">Oxygen transport</keyword>
<keyword id="KW-0597">Phosphoprotein</keyword>
<keyword id="KW-1185">Reference proteome</keyword>
<keyword id="KW-0813">Transport</keyword>
<sequence>MSLTKTEGTIIVSMWAKISTQADTIGTETLERLFLSHPQTKTYFPHFDLHPGSAQLRAHGSKVVAAVGDAVKSIDNIGGALSKLSELHAYILRVDPVNFKLLSHCLLVTLAARFPADFTAEAHAAWDKFLSVVSSVLTEKYR</sequence>
<reference key="1">
    <citation type="journal article" date="1985" name="J. Mol. Evol.">
        <title>Comparison of human and chimpanzee zeta 1 globin genes.</title>
        <authorList>
            <person name="Willard C."/>
            <person name="Wong E."/>
            <person name="Hess J.F."/>
            <person name="Shen C.-K.J."/>
            <person name="Chapman B."/>
            <person name="Wilson A.C."/>
            <person name="Schmid C.W."/>
        </authorList>
    </citation>
    <scope>NUCLEOTIDE SEQUENCE [GENOMIC DNA]</scope>
</reference>
<comment type="function">
    <text evidence="1">The zeta chain is an alpha-type chain of mammalian embryonic hemoglobin.</text>
</comment>
<comment type="subunit">
    <text evidence="1">Heterotetramer of two zeta chains and beta-type chains.</text>
</comment>
<comment type="similarity">
    <text evidence="3">Belongs to the globin family.</text>
</comment>
<evidence type="ECO:0000250" key="1"/>
<evidence type="ECO:0000250" key="2">
    <source>
        <dbReference type="UniProtKB" id="P02008"/>
    </source>
</evidence>
<evidence type="ECO:0000255" key="3">
    <source>
        <dbReference type="PROSITE-ProRule" id="PRU00238"/>
    </source>
</evidence>
<proteinExistence type="inferred from homology"/>